<accession>P9WF17</accession>
<accession>F2GGQ3</accession>
<accession>P0CW28</accession>
<accession>Q8VJT6</accession>
<sequence>MNEVSIRTLNQETSKVLARVKRGEEINLTERGKVIARIIPASAGPLDSLISTGSVQPARVHGPAPRPTIPMRGGLDSGTLLERMRAEERY</sequence>
<evidence type="ECO:0000256" key="1">
    <source>
        <dbReference type="SAM" id="MobiDB-lite"/>
    </source>
</evidence>
<evidence type="ECO:0000269" key="2">
    <source>
    </source>
</evidence>
<evidence type="ECO:0000305" key="3"/>
<protein>
    <recommendedName>
        <fullName>Antitoxin VapB35</fullName>
    </recommendedName>
</protein>
<reference key="1">
    <citation type="journal article" date="1998" name="Nature">
        <title>Deciphering the biology of Mycobacterium tuberculosis from the complete genome sequence.</title>
        <authorList>
            <person name="Cole S.T."/>
            <person name="Brosch R."/>
            <person name="Parkhill J."/>
            <person name="Garnier T."/>
            <person name="Churcher C.M."/>
            <person name="Harris D.E."/>
            <person name="Gordon S.V."/>
            <person name="Eiglmeier K."/>
            <person name="Gas S."/>
            <person name="Barry C.E. III"/>
            <person name="Tekaia F."/>
            <person name="Badcock K."/>
            <person name="Basham D."/>
            <person name="Brown D."/>
            <person name="Chillingworth T."/>
            <person name="Connor R."/>
            <person name="Davies R.M."/>
            <person name="Devlin K."/>
            <person name="Feltwell T."/>
            <person name="Gentles S."/>
            <person name="Hamlin N."/>
            <person name="Holroyd S."/>
            <person name="Hornsby T."/>
            <person name="Jagels K."/>
            <person name="Krogh A."/>
            <person name="McLean J."/>
            <person name="Moule S."/>
            <person name="Murphy L.D."/>
            <person name="Oliver S."/>
            <person name="Osborne J."/>
            <person name="Quail M.A."/>
            <person name="Rajandream M.A."/>
            <person name="Rogers J."/>
            <person name="Rutter S."/>
            <person name="Seeger K."/>
            <person name="Skelton S."/>
            <person name="Squares S."/>
            <person name="Squares R."/>
            <person name="Sulston J.E."/>
            <person name="Taylor K."/>
            <person name="Whitehead S."/>
            <person name="Barrell B.G."/>
        </authorList>
    </citation>
    <scope>NUCLEOTIDE SEQUENCE [LARGE SCALE GENOMIC DNA]</scope>
    <source>
        <strain>ATCC 25618 / H37Rv</strain>
    </source>
</reference>
<reference key="2">
    <citation type="journal article" date="2009" name="PLoS Genet.">
        <title>Comprehensive functional analysis of Mycobacterium tuberculosis toxin-antitoxin systems: implications for pathogenesis, stress responses, and evolution.</title>
        <authorList>
            <person name="Ramage H.R."/>
            <person name="Connolly L.E."/>
            <person name="Cox J.S."/>
        </authorList>
    </citation>
    <scope>EXPRESSION IN M.SMEGMATIS</scope>
    <scope>FUNCTION AS AN ANTITOXIN</scope>
    <source>
        <strain>ATCC 35801 / TMC 107 / Erdman</strain>
    </source>
</reference>
<name>VPB35_MYCTU</name>
<dbReference type="EMBL" id="AL123456">
    <property type="protein sequence ID" value="CCP44731.1"/>
    <property type="molecule type" value="Genomic_DNA"/>
</dbReference>
<dbReference type="RefSeq" id="WP_003899100.1">
    <property type="nucleotide sequence ID" value="NZ_NVQJ01000048.1"/>
</dbReference>
<dbReference type="RefSeq" id="YP_007410641.1">
    <property type="nucleotide sequence ID" value="NC_000962.3"/>
</dbReference>
<dbReference type="SMR" id="P9WF17"/>
<dbReference type="STRING" id="83332.Rv1962A"/>
<dbReference type="PaxDb" id="83332-Rv1962A"/>
<dbReference type="GeneID" id="14515903"/>
<dbReference type="KEGG" id="mtu:Rv1962A"/>
<dbReference type="KEGG" id="mtv:RVBD_1962A"/>
<dbReference type="TubercuList" id="Rv1962A"/>
<dbReference type="eggNOG" id="COG4118">
    <property type="taxonomic scope" value="Bacteria"/>
</dbReference>
<dbReference type="InParanoid" id="P9WF17"/>
<dbReference type="OrthoDB" id="557859at2"/>
<dbReference type="Proteomes" id="UP000001584">
    <property type="component" value="Chromosome"/>
</dbReference>
<dbReference type="GO" id="GO:0097351">
    <property type="term" value="F:toxin sequestering activity"/>
    <property type="evidence" value="ECO:0000318"/>
    <property type="project" value="GO_Central"/>
</dbReference>
<dbReference type="GO" id="GO:0045927">
    <property type="term" value="P:positive regulation of growth"/>
    <property type="evidence" value="ECO:0000315"/>
    <property type="project" value="MTBBASE"/>
</dbReference>
<dbReference type="Gene3D" id="3.40.1620.10">
    <property type="entry name" value="YefM-like domain"/>
    <property type="match status" value="1"/>
</dbReference>
<dbReference type="InterPro" id="IPR051416">
    <property type="entry name" value="phD-YefM_TA_antitoxins"/>
</dbReference>
<dbReference type="InterPro" id="IPR036165">
    <property type="entry name" value="YefM-like_sf"/>
</dbReference>
<dbReference type="NCBIfam" id="TIGR01552">
    <property type="entry name" value="phd_fam"/>
    <property type="match status" value="1"/>
</dbReference>
<dbReference type="PANTHER" id="PTHR35377:SF5">
    <property type="entry name" value="ANTITOXIN VAPB46"/>
    <property type="match status" value="1"/>
</dbReference>
<dbReference type="PANTHER" id="PTHR35377">
    <property type="entry name" value="ANTITOXIN VAPB49-RELATED-RELATED"/>
    <property type="match status" value="1"/>
</dbReference>
<dbReference type="SUPFAM" id="SSF143120">
    <property type="entry name" value="YefM-like"/>
    <property type="match status" value="1"/>
</dbReference>
<comment type="function">
    <text evidence="2">Antitoxin component of a type II toxin-antitoxin (TA) system. Upon expression in M.smegmatis neutralizes the effect of cognate toxin VapC35.</text>
</comment>
<comment type="similarity">
    <text evidence="3">Belongs to the phD/YefM antitoxin family.</text>
</comment>
<gene>
    <name type="primary">vapB35</name>
    <name type="ordered locus">Rv1962A</name>
</gene>
<organism>
    <name type="scientific">Mycobacterium tuberculosis (strain ATCC 25618 / H37Rv)</name>
    <dbReference type="NCBI Taxonomy" id="83332"/>
    <lineage>
        <taxon>Bacteria</taxon>
        <taxon>Bacillati</taxon>
        <taxon>Actinomycetota</taxon>
        <taxon>Actinomycetes</taxon>
        <taxon>Mycobacteriales</taxon>
        <taxon>Mycobacteriaceae</taxon>
        <taxon>Mycobacterium</taxon>
        <taxon>Mycobacterium tuberculosis complex</taxon>
    </lineage>
</organism>
<proteinExistence type="evidence at protein level"/>
<keyword id="KW-1185">Reference proteome</keyword>
<keyword id="KW-1277">Toxin-antitoxin system</keyword>
<feature type="chain" id="PRO_0000408048" description="Antitoxin VapB35">
    <location>
        <begin position="1"/>
        <end position="90"/>
    </location>
</feature>
<feature type="region of interest" description="Disordered" evidence="1">
    <location>
        <begin position="53"/>
        <end position="90"/>
    </location>
</feature>